<organism>
    <name type="scientific">Xenopus laevis</name>
    <name type="common">African clawed frog</name>
    <dbReference type="NCBI Taxonomy" id="8355"/>
    <lineage>
        <taxon>Eukaryota</taxon>
        <taxon>Metazoa</taxon>
        <taxon>Chordata</taxon>
        <taxon>Craniata</taxon>
        <taxon>Vertebrata</taxon>
        <taxon>Euteleostomi</taxon>
        <taxon>Amphibia</taxon>
        <taxon>Batrachia</taxon>
        <taxon>Anura</taxon>
        <taxon>Pipoidea</taxon>
        <taxon>Pipidae</taxon>
        <taxon>Xenopodinae</taxon>
        <taxon>Xenopus</taxon>
        <taxon>Xenopus</taxon>
    </lineage>
</organism>
<proteinExistence type="evidence at transcript level"/>
<sequence length="298" mass="33245">MEHTLFGCLRSPHATSQGLHPFAQSSLALHGRSDHMSYPDLSSSSSSCILTGYPNEESMFGSQHHRGHHHHHHHHHQQQQHQTLQSNWHIPQMSSPPASTRHSLCLQQDSGPPDLSGSPSILCSNTSSLGTNNSTGAACVTGDYGRQSLSPAEAEKRTGKRKSDSSDSQEGSYKSDVNSKPRKERTAFTKEQIRELEAEFAHHNYLTRLRRYEIAVNLDLTERQVKVWFQNRRMKWKRVKGGQQGAAAREKELVNVKKGTLLPSELSGIRSNSLQHTADSLTNDDSHDSSQSSEHAHL</sequence>
<reference key="1">
    <citation type="journal article" date="1993" name="Nucleic Acids Res.">
        <title>Amino acid sequence of Mox-2 and comparison to its Xenopus and rat homologs.</title>
        <authorList>
            <person name="Candia A.F."/>
            <person name="Kovalik J.-P."/>
            <person name="Wright C.V.E."/>
        </authorList>
    </citation>
    <scope>NUCLEOTIDE SEQUENCE [MRNA]</scope>
</reference>
<dbReference type="EMBL" id="L20432">
    <property type="protein sequence ID" value="AAB00146.1"/>
    <property type="molecule type" value="mRNA"/>
</dbReference>
<dbReference type="PIR" id="S41469">
    <property type="entry name" value="S41469"/>
</dbReference>
<dbReference type="RefSeq" id="NP_001165453.1">
    <property type="nucleotide sequence ID" value="NM_001171982.1"/>
</dbReference>
<dbReference type="SMR" id="P39021"/>
<dbReference type="GeneID" id="100337513"/>
<dbReference type="KEGG" id="xla:100337513"/>
<dbReference type="AGR" id="Xenbase:XB-GENE-6464370"/>
<dbReference type="CTD" id="100337513"/>
<dbReference type="Xenbase" id="XB-GENE-6464370">
    <property type="gene designation" value="meox2.L"/>
</dbReference>
<dbReference type="OrthoDB" id="6159439at2759"/>
<dbReference type="Proteomes" id="UP000186698">
    <property type="component" value="Chromosome 6L"/>
</dbReference>
<dbReference type="Bgee" id="100337513">
    <property type="expression patterns" value="Expressed in muscle tissue and 10 other cell types or tissues"/>
</dbReference>
<dbReference type="GO" id="GO:0016607">
    <property type="term" value="C:nuclear speck"/>
    <property type="evidence" value="ECO:0007669"/>
    <property type="project" value="UniProtKB-SubCell"/>
</dbReference>
<dbReference type="GO" id="GO:0005634">
    <property type="term" value="C:nucleus"/>
    <property type="evidence" value="ECO:0000250"/>
    <property type="project" value="UniProtKB"/>
</dbReference>
<dbReference type="GO" id="GO:0003700">
    <property type="term" value="F:DNA-binding transcription factor activity"/>
    <property type="evidence" value="ECO:0000250"/>
    <property type="project" value="UniProtKB"/>
</dbReference>
<dbReference type="GO" id="GO:0000981">
    <property type="term" value="F:DNA-binding transcription factor activity, RNA polymerase II-specific"/>
    <property type="evidence" value="ECO:0000318"/>
    <property type="project" value="GO_Central"/>
</dbReference>
<dbReference type="GO" id="GO:0000978">
    <property type="term" value="F:RNA polymerase II cis-regulatory region sequence-specific DNA binding"/>
    <property type="evidence" value="ECO:0000318"/>
    <property type="project" value="GO_Central"/>
</dbReference>
<dbReference type="GO" id="GO:0043565">
    <property type="term" value="F:sequence-specific DNA binding"/>
    <property type="evidence" value="ECO:0000250"/>
    <property type="project" value="UniProtKB"/>
</dbReference>
<dbReference type="GO" id="GO:0045944">
    <property type="term" value="P:positive regulation of transcription by RNA polymerase II"/>
    <property type="evidence" value="ECO:0007669"/>
    <property type="project" value="InterPro"/>
</dbReference>
<dbReference type="GO" id="GO:0006357">
    <property type="term" value="P:regulation of transcription by RNA polymerase II"/>
    <property type="evidence" value="ECO:0000318"/>
    <property type="project" value="GO_Central"/>
</dbReference>
<dbReference type="GO" id="GO:0061053">
    <property type="term" value="P:somite development"/>
    <property type="evidence" value="ECO:0000318"/>
    <property type="project" value="GO_Central"/>
</dbReference>
<dbReference type="CDD" id="cd00086">
    <property type="entry name" value="homeodomain"/>
    <property type="match status" value="1"/>
</dbReference>
<dbReference type="FunFam" id="1.10.10.60:FF:000109">
    <property type="entry name" value="Homeobox protein MOX-2"/>
    <property type="match status" value="1"/>
</dbReference>
<dbReference type="Gene3D" id="1.10.10.60">
    <property type="entry name" value="Homeodomain-like"/>
    <property type="match status" value="1"/>
</dbReference>
<dbReference type="InterPro" id="IPR001356">
    <property type="entry name" value="HD"/>
</dbReference>
<dbReference type="InterPro" id="IPR020479">
    <property type="entry name" value="HD_metazoa"/>
</dbReference>
<dbReference type="InterPro" id="IPR017970">
    <property type="entry name" value="Homeobox_CS"/>
</dbReference>
<dbReference type="InterPro" id="IPR009057">
    <property type="entry name" value="Homeodomain-like_sf"/>
</dbReference>
<dbReference type="InterPro" id="IPR042634">
    <property type="entry name" value="MOX-1/MOX-2"/>
</dbReference>
<dbReference type="PANTHER" id="PTHR24328">
    <property type="entry name" value="HOMEOBOX PROTEIN MOX"/>
    <property type="match status" value="1"/>
</dbReference>
<dbReference type="PANTHER" id="PTHR24328:SF1">
    <property type="entry name" value="HOMEOBOX PROTEIN MOX-2"/>
    <property type="match status" value="1"/>
</dbReference>
<dbReference type="Pfam" id="PF00046">
    <property type="entry name" value="Homeodomain"/>
    <property type="match status" value="1"/>
</dbReference>
<dbReference type="PRINTS" id="PR00024">
    <property type="entry name" value="HOMEOBOX"/>
</dbReference>
<dbReference type="SMART" id="SM00389">
    <property type="entry name" value="HOX"/>
    <property type="match status" value="1"/>
</dbReference>
<dbReference type="SUPFAM" id="SSF46689">
    <property type="entry name" value="Homeodomain-like"/>
    <property type="match status" value="1"/>
</dbReference>
<dbReference type="PROSITE" id="PS00027">
    <property type="entry name" value="HOMEOBOX_1"/>
    <property type="match status" value="1"/>
</dbReference>
<dbReference type="PROSITE" id="PS50071">
    <property type="entry name" value="HOMEOBOX_2"/>
    <property type="match status" value="1"/>
</dbReference>
<protein>
    <recommendedName>
        <fullName evidence="5">Homeobox protein MOX-2</fullName>
    </recommendedName>
</protein>
<evidence type="ECO:0000250" key="1">
    <source>
        <dbReference type="UniProtKB" id="P32443"/>
    </source>
</evidence>
<evidence type="ECO:0000250" key="2">
    <source>
        <dbReference type="UniProtKB" id="P50222"/>
    </source>
</evidence>
<evidence type="ECO:0000255" key="3">
    <source>
        <dbReference type="PROSITE-ProRule" id="PRU00108"/>
    </source>
</evidence>
<evidence type="ECO:0000256" key="4">
    <source>
        <dbReference type="SAM" id="MobiDB-lite"/>
    </source>
</evidence>
<evidence type="ECO:0000303" key="5">
    <source>
    </source>
</evidence>
<name>MEOX2_XENLA</name>
<accession>P39021</accession>
<comment type="function">
    <text evidence="1">Mesodermal transcription factor that plays a key role in somitogenesis and somitogenesis and limb muscle differentiation. Required during limb development for normal appendicular muscle formation and for the normal regulation of myogenic genes. Also acts as a negative regulator of angiogenesis.</text>
</comment>
<comment type="subcellular location">
    <subcellularLocation>
        <location evidence="2">Nucleus</location>
    </subcellularLocation>
    <subcellularLocation>
        <location evidence="2">Nucleus speckle</location>
    </subcellularLocation>
</comment>
<comment type="domain">
    <text evidence="2">The polyhistidine repeat may act as a targeting signal to nuclear speckles.</text>
</comment>
<feature type="chain" id="PRO_0000049200" description="Homeobox protein MOX-2">
    <location>
        <begin position="1"/>
        <end position="298"/>
    </location>
</feature>
<feature type="DNA-binding region" description="Homeobox" evidence="3">
    <location>
        <begin position="181"/>
        <end position="240"/>
    </location>
</feature>
<feature type="region of interest" description="Disordered" evidence="4">
    <location>
        <begin position="57"/>
        <end position="122"/>
    </location>
</feature>
<feature type="region of interest" description="Disordered" evidence="4">
    <location>
        <begin position="143"/>
        <end position="186"/>
    </location>
</feature>
<feature type="region of interest" description="Disordered" evidence="4">
    <location>
        <begin position="277"/>
        <end position="298"/>
    </location>
</feature>
<feature type="compositionally biased region" description="Basic residues" evidence="4">
    <location>
        <begin position="63"/>
        <end position="78"/>
    </location>
</feature>
<feature type="compositionally biased region" description="Polar residues" evidence="4">
    <location>
        <begin position="83"/>
        <end position="108"/>
    </location>
</feature>
<feature type="compositionally biased region" description="Low complexity" evidence="4">
    <location>
        <begin position="109"/>
        <end position="122"/>
    </location>
</feature>
<feature type="compositionally biased region" description="Basic and acidic residues" evidence="4">
    <location>
        <begin position="153"/>
        <end position="165"/>
    </location>
</feature>
<feature type="compositionally biased region" description="Polar residues" evidence="4">
    <location>
        <begin position="166"/>
        <end position="176"/>
    </location>
</feature>
<feature type="compositionally biased region" description="Basic and acidic residues" evidence="4">
    <location>
        <begin position="177"/>
        <end position="186"/>
    </location>
</feature>
<feature type="compositionally biased region" description="Basic and acidic residues" evidence="4">
    <location>
        <begin position="284"/>
        <end position="298"/>
    </location>
</feature>
<keyword id="KW-0010">Activator</keyword>
<keyword id="KW-0217">Developmental protein</keyword>
<keyword id="KW-0238">DNA-binding</keyword>
<keyword id="KW-0371">Homeobox</keyword>
<keyword id="KW-0539">Nucleus</keyword>
<keyword id="KW-1185">Reference proteome</keyword>
<keyword id="KW-0804">Transcription</keyword>
<keyword id="KW-0805">Transcription regulation</keyword>
<gene>
    <name evidence="2" type="primary">meox2</name>
    <name evidence="5" type="synonym">mox2</name>
</gene>